<accession>Q7KBL8</accession>
<accession>Q0IGZ7</accession>
<gene>
    <name type="primary">ix</name>
    <name type="synonym">MED29</name>
    <name type="ORF">CG13201</name>
</gene>
<sequence length="188" mass="21147">MNPNMNMMPMSGPQMMQVMQSSPSGPPGPVQHQQQQPPQPLQQQQQAEKLDNISRVKSLLGPLRESMFLTIRSSAFALQQNNLADNLKRDTGAHHVPRFDKHLEDFYACCDQIEIHLKTAMQCLQQQNSSNHYLPGPVTPMRMETFMPDNAGPISYPTYLNTVRVHIQSAKDIHDTLISAAQNISQAD</sequence>
<name>MED29_DROME</name>
<comment type="function">
    <text evidence="1 3">Component of the Mediator complex, a coactivator involved in the regulated transcription of nearly all RNA polymerase II-dependent genes. Mediator functions as a bridge to convey information from gene-specific regulatory proteins to the basal RNA polymerase II transcription machinery. Mediator is recruited to promoters by direct interactions with regulatory proteins and serves as a scaffold for the assembly of a functional preinitiation complex with RNA polymerase II and the general transcription factors (By similarity). Required for female somatic sexual development.</text>
</comment>
<comment type="subunit">
    <text evidence="1 3">Component of the Mediator complex (By similarity). Self-associates. Interacts with dsx.</text>
</comment>
<comment type="interaction">
    <interactant intactId="EBI-96589">
        <id>Q7KBL8</id>
    </interactant>
    <interactant intactId="EBI-90766">
        <id>A1ZBT5</id>
        <label>MED8</label>
    </interactant>
    <organismsDiffer>false</organismsDiffer>
    <experiments>3</experiments>
</comment>
<comment type="subcellular location">
    <subcellularLocation>
        <location evidence="4">Nucleus</location>
    </subcellularLocation>
</comment>
<comment type="similarity">
    <text evidence="4">Belongs to the Mediator complex subunit 29 family.</text>
</comment>
<comment type="sequence caution" evidence="4">
    <conflict type="erroneous initiation">
        <sequence resource="EMBL-CDS" id="ABI34154"/>
    </conflict>
    <text>Extended N-terminus.</text>
</comment>
<comment type="sequence caution" evidence="4">
    <conflict type="frameshift">
        <sequence resource="EMBL-CDS" id="ABI34154"/>
    </conflict>
</comment>
<proteinExistence type="evidence at protein level"/>
<protein>
    <recommendedName>
        <fullName>Mediator of RNA polymerase II transcription subunit 29</fullName>
    </recommendedName>
    <alternativeName>
        <fullName>Mediator complex subunit 29</fullName>
    </alternativeName>
    <alternativeName>
        <fullName>Protein intersex</fullName>
    </alternativeName>
</protein>
<feature type="chain" id="PRO_0000305703" description="Mediator of RNA polymerase II transcription subunit 29">
    <location>
        <begin position="1"/>
        <end position="188"/>
    </location>
</feature>
<feature type="region of interest" description="Disordered" evidence="2">
    <location>
        <begin position="1"/>
        <end position="43"/>
    </location>
</feature>
<feature type="compositionally biased region" description="Low complexity" evidence="2">
    <location>
        <begin position="1"/>
        <end position="23"/>
    </location>
</feature>
<feature type="compositionally biased region" description="Low complexity" evidence="2">
    <location>
        <begin position="30"/>
        <end position="43"/>
    </location>
</feature>
<dbReference type="EMBL" id="AF491289">
    <property type="protein sequence ID" value="AAN37397.1"/>
    <property type="molecule type" value="Genomic_DNA"/>
</dbReference>
<dbReference type="EMBL" id="AE013599">
    <property type="protein sequence ID" value="AAF58653.1"/>
    <property type="molecule type" value="Genomic_DNA"/>
</dbReference>
<dbReference type="EMBL" id="BT028773">
    <property type="protein sequence ID" value="ABI34154.1"/>
    <property type="status" value="ALT_SEQ"/>
    <property type="molecule type" value="mRNA"/>
</dbReference>
<dbReference type="RefSeq" id="NP_610677.1">
    <property type="nucleotide sequence ID" value="NM_136833.2"/>
</dbReference>
<dbReference type="SMR" id="Q7KBL8"/>
<dbReference type="BioGRID" id="69950">
    <property type="interactions" value="37"/>
</dbReference>
<dbReference type="ComplexPortal" id="CPX-2308">
    <property type="entry name" value="Core mediator complex"/>
</dbReference>
<dbReference type="FunCoup" id="Q7KBL8">
    <property type="interactions" value="1035"/>
</dbReference>
<dbReference type="IntAct" id="Q7KBL8">
    <property type="interactions" value="49"/>
</dbReference>
<dbReference type="STRING" id="7227.FBpp0087251"/>
<dbReference type="GlyGen" id="Q7KBL8">
    <property type="glycosylation" value="1 site"/>
</dbReference>
<dbReference type="PaxDb" id="7227-FBpp0087251"/>
<dbReference type="DNASU" id="45881"/>
<dbReference type="EnsemblMetazoa" id="FBtr0088154">
    <property type="protein sequence ID" value="FBpp0087251"/>
    <property type="gene ID" value="FBgn0001276"/>
</dbReference>
<dbReference type="GeneID" id="45881"/>
<dbReference type="KEGG" id="dme:Dmel_CG13201"/>
<dbReference type="AGR" id="FB:FBgn0001276"/>
<dbReference type="CTD" id="45881"/>
<dbReference type="FlyBase" id="FBgn0001276">
    <property type="gene designation" value="ix"/>
</dbReference>
<dbReference type="VEuPathDB" id="VectorBase:FBgn0001276"/>
<dbReference type="eggNOG" id="ENOG502QRNJ">
    <property type="taxonomic scope" value="Eukaryota"/>
</dbReference>
<dbReference type="HOGENOM" id="CLU_101133_0_0_1"/>
<dbReference type="InParanoid" id="Q7KBL8"/>
<dbReference type="OMA" id="NHYLPGP"/>
<dbReference type="OrthoDB" id="6366949at2759"/>
<dbReference type="PhylomeDB" id="Q7KBL8"/>
<dbReference type="BioGRID-ORCS" id="45881">
    <property type="hits" value="1 hit in 1 CRISPR screen"/>
</dbReference>
<dbReference type="GenomeRNAi" id="45881"/>
<dbReference type="PRO" id="PR:Q7KBL8"/>
<dbReference type="Proteomes" id="UP000000803">
    <property type="component" value="Chromosome 2R"/>
</dbReference>
<dbReference type="Bgee" id="FBgn0001276">
    <property type="expression patterns" value="Expressed in T neuron T5a (Drosophila) in embryonic/larval optic lobe (Drosophila) and 61 other cell types or tissues"/>
</dbReference>
<dbReference type="ExpressionAtlas" id="Q7KBL8">
    <property type="expression patterns" value="baseline and differential"/>
</dbReference>
<dbReference type="GO" id="GO:0016592">
    <property type="term" value="C:mediator complex"/>
    <property type="evidence" value="ECO:0000314"/>
    <property type="project" value="UniProtKB"/>
</dbReference>
<dbReference type="GO" id="GO:0140297">
    <property type="term" value="F:DNA-binding transcription factor binding"/>
    <property type="evidence" value="ECO:0000353"/>
    <property type="project" value="FlyBase"/>
</dbReference>
<dbReference type="GO" id="GO:0003712">
    <property type="term" value="F:transcription coregulator activity"/>
    <property type="evidence" value="ECO:0000314"/>
    <property type="project" value="UniProtKB"/>
</dbReference>
<dbReference type="GO" id="GO:0030154">
    <property type="term" value="P:cell differentiation"/>
    <property type="evidence" value="ECO:0007669"/>
    <property type="project" value="UniProtKB-KW"/>
</dbReference>
<dbReference type="GO" id="GO:0019101">
    <property type="term" value="P:female somatic sex determination"/>
    <property type="evidence" value="ECO:0000304"/>
    <property type="project" value="FlyBase"/>
</dbReference>
<dbReference type="GO" id="GO:0035263">
    <property type="term" value="P:genital disc sexually dimorphic development"/>
    <property type="evidence" value="ECO:0000315"/>
    <property type="project" value="FlyBase"/>
</dbReference>
<dbReference type="GO" id="GO:0048804">
    <property type="term" value="P:imaginal disc-derived female genitalia morphogenesis"/>
    <property type="evidence" value="ECO:0000315"/>
    <property type="project" value="FlyBase"/>
</dbReference>
<dbReference type="GO" id="GO:0006357">
    <property type="term" value="P:regulation of transcription by RNA polymerase II"/>
    <property type="evidence" value="ECO:0000314"/>
    <property type="project" value="UniProtKB"/>
</dbReference>
<dbReference type="GO" id="GO:0007530">
    <property type="term" value="P:sex determination"/>
    <property type="evidence" value="ECO:0000315"/>
    <property type="project" value="FlyBase"/>
</dbReference>
<dbReference type="GO" id="GO:0007548">
    <property type="term" value="P:sex differentiation"/>
    <property type="evidence" value="ECO:0000304"/>
    <property type="project" value="FlyBase"/>
</dbReference>
<dbReference type="GO" id="GO:0018993">
    <property type="term" value="P:somatic sex determination"/>
    <property type="evidence" value="ECO:0000303"/>
    <property type="project" value="FlyBase"/>
</dbReference>
<dbReference type="InterPro" id="IPR021018">
    <property type="entry name" value="Mediator_Med29_met"/>
</dbReference>
<dbReference type="PANTHER" id="PTHR28314">
    <property type="entry name" value="MEDIATOR OF RNA POLYMERASE II TRANSCRIPTION SUBUNIT 29"/>
    <property type="match status" value="1"/>
</dbReference>
<dbReference type="PANTHER" id="PTHR28314:SF1">
    <property type="entry name" value="MEDIATOR OF RNA POLYMERASE II TRANSCRIPTION SUBUNIT 29"/>
    <property type="match status" value="1"/>
</dbReference>
<dbReference type="Pfam" id="PF11568">
    <property type="entry name" value="Med29"/>
    <property type="match status" value="1"/>
</dbReference>
<reference key="1">
    <citation type="journal article" date="2002" name="Development">
        <title>Intersex, a gene required for female sexual development in Drosophila, is expressed in both sexes and functions together with doublesex to regulate terminal differentiation.</title>
        <authorList>
            <person name="Garrett-Engele C.M."/>
            <person name="Siegal M.L."/>
            <person name="Manoli D.S."/>
            <person name="Williams B.C."/>
            <person name="Li H."/>
            <person name="Baker B.S."/>
        </authorList>
    </citation>
    <scope>NUCLEOTIDE SEQUENCE [GENOMIC DNA]</scope>
    <scope>FUNCTION</scope>
    <scope>SELF-ASSOCIATION</scope>
    <scope>INTERACTION WITH DSX</scope>
</reference>
<reference key="2">
    <citation type="journal article" date="2000" name="Science">
        <title>The genome sequence of Drosophila melanogaster.</title>
        <authorList>
            <person name="Adams M.D."/>
            <person name="Celniker S.E."/>
            <person name="Holt R.A."/>
            <person name="Evans C.A."/>
            <person name="Gocayne J.D."/>
            <person name="Amanatides P.G."/>
            <person name="Scherer S.E."/>
            <person name="Li P.W."/>
            <person name="Hoskins R.A."/>
            <person name="Galle R.F."/>
            <person name="George R.A."/>
            <person name="Lewis S.E."/>
            <person name="Richards S."/>
            <person name="Ashburner M."/>
            <person name="Henderson S.N."/>
            <person name="Sutton G.G."/>
            <person name="Wortman J.R."/>
            <person name="Yandell M.D."/>
            <person name="Zhang Q."/>
            <person name="Chen L.X."/>
            <person name="Brandon R.C."/>
            <person name="Rogers Y.-H.C."/>
            <person name="Blazej R.G."/>
            <person name="Champe M."/>
            <person name="Pfeiffer B.D."/>
            <person name="Wan K.H."/>
            <person name="Doyle C."/>
            <person name="Baxter E.G."/>
            <person name="Helt G."/>
            <person name="Nelson C.R."/>
            <person name="Miklos G.L.G."/>
            <person name="Abril J.F."/>
            <person name="Agbayani A."/>
            <person name="An H.-J."/>
            <person name="Andrews-Pfannkoch C."/>
            <person name="Baldwin D."/>
            <person name="Ballew R.M."/>
            <person name="Basu A."/>
            <person name="Baxendale J."/>
            <person name="Bayraktaroglu L."/>
            <person name="Beasley E.M."/>
            <person name="Beeson K.Y."/>
            <person name="Benos P.V."/>
            <person name="Berman B.P."/>
            <person name="Bhandari D."/>
            <person name="Bolshakov S."/>
            <person name="Borkova D."/>
            <person name="Botchan M.R."/>
            <person name="Bouck J."/>
            <person name="Brokstein P."/>
            <person name="Brottier P."/>
            <person name="Burtis K.C."/>
            <person name="Busam D.A."/>
            <person name="Butler H."/>
            <person name="Cadieu E."/>
            <person name="Center A."/>
            <person name="Chandra I."/>
            <person name="Cherry J.M."/>
            <person name="Cawley S."/>
            <person name="Dahlke C."/>
            <person name="Davenport L.B."/>
            <person name="Davies P."/>
            <person name="de Pablos B."/>
            <person name="Delcher A."/>
            <person name="Deng Z."/>
            <person name="Mays A.D."/>
            <person name="Dew I."/>
            <person name="Dietz S.M."/>
            <person name="Dodson K."/>
            <person name="Doup L.E."/>
            <person name="Downes M."/>
            <person name="Dugan-Rocha S."/>
            <person name="Dunkov B.C."/>
            <person name="Dunn P."/>
            <person name="Durbin K.J."/>
            <person name="Evangelista C.C."/>
            <person name="Ferraz C."/>
            <person name="Ferriera S."/>
            <person name="Fleischmann W."/>
            <person name="Fosler C."/>
            <person name="Gabrielian A.E."/>
            <person name="Garg N.S."/>
            <person name="Gelbart W.M."/>
            <person name="Glasser K."/>
            <person name="Glodek A."/>
            <person name="Gong F."/>
            <person name="Gorrell J.H."/>
            <person name="Gu Z."/>
            <person name="Guan P."/>
            <person name="Harris M."/>
            <person name="Harris N.L."/>
            <person name="Harvey D.A."/>
            <person name="Heiman T.J."/>
            <person name="Hernandez J.R."/>
            <person name="Houck J."/>
            <person name="Hostin D."/>
            <person name="Houston K.A."/>
            <person name="Howland T.J."/>
            <person name="Wei M.-H."/>
            <person name="Ibegwam C."/>
            <person name="Jalali M."/>
            <person name="Kalush F."/>
            <person name="Karpen G.H."/>
            <person name="Ke Z."/>
            <person name="Kennison J.A."/>
            <person name="Ketchum K.A."/>
            <person name="Kimmel B.E."/>
            <person name="Kodira C.D."/>
            <person name="Kraft C.L."/>
            <person name="Kravitz S."/>
            <person name="Kulp D."/>
            <person name="Lai Z."/>
            <person name="Lasko P."/>
            <person name="Lei Y."/>
            <person name="Levitsky A.A."/>
            <person name="Li J.H."/>
            <person name="Li Z."/>
            <person name="Liang Y."/>
            <person name="Lin X."/>
            <person name="Liu X."/>
            <person name="Mattei B."/>
            <person name="McIntosh T.C."/>
            <person name="McLeod M.P."/>
            <person name="McPherson D."/>
            <person name="Merkulov G."/>
            <person name="Milshina N.V."/>
            <person name="Mobarry C."/>
            <person name="Morris J."/>
            <person name="Moshrefi A."/>
            <person name="Mount S.M."/>
            <person name="Moy M."/>
            <person name="Murphy B."/>
            <person name="Murphy L."/>
            <person name="Muzny D.M."/>
            <person name="Nelson D.L."/>
            <person name="Nelson D.R."/>
            <person name="Nelson K.A."/>
            <person name="Nixon K."/>
            <person name="Nusskern D.R."/>
            <person name="Pacleb J.M."/>
            <person name="Palazzolo M."/>
            <person name="Pittman G.S."/>
            <person name="Pan S."/>
            <person name="Pollard J."/>
            <person name="Puri V."/>
            <person name="Reese M.G."/>
            <person name="Reinert K."/>
            <person name="Remington K."/>
            <person name="Saunders R.D.C."/>
            <person name="Scheeler F."/>
            <person name="Shen H."/>
            <person name="Shue B.C."/>
            <person name="Siden-Kiamos I."/>
            <person name="Simpson M."/>
            <person name="Skupski M.P."/>
            <person name="Smith T.J."/>
            <person name="Spier E."/>
            <person name="Spradling A.C."/>
            <person name="Stapleton M."/>
            <person name="Strong R."/>
            <person name="Sun E."/>
            <person name="Svirskas R."/>
            <person name="Tector C."/>
            <person name="Turner R."/>
            <person name="Venter E."/>
            <person name="Wang A.H."/>
            <person name="Wang X."/>
            <person name="Wang Z.-Y."/>
            <person name="Wassarman D.A."/>
            <person name="Weinstock G.M."/>
            <person name="Weissenbach J."/>
            <person name="Williams S.M."/>
            <person name="Woodage T."/>
            <person name="Worley K.C."/>
            <person name="Wu D."/>
            <person name="Yang S."/>
            <person name="Yao Q.A."/>
            <person name="Ye J."/>
            <person name="Yeh R.-F."/>
            <person name="Zaveri J.S."/>
            <person name="Zhan M."/>
            <person name="Zhang G."/>
            <person name="Zhao Q."/>
            <person name="Zheng L."/>
            <person name="Zheng X.H."/>
            <person name="Zhong F.N."/>
            <person name="Zhong W."/>
            <person name="Zhou X."/>
            <person name="Zhu S.C."/>
            <person name="Zhu X."/>
            <person name="Smith H.O."/>
            <person name="Gibbs R.A."/>
            <person name="Myers E.W."/>
            <person name="Rubin G.M."/>
            <person name="Venter J.C."/>
        </authorList>
    </citation>
    <scope>NUCLEOTIDE SEQUENCE [LARGE SCALE GENOMIC DNA]</scope>
    <source>
        <strain>Berkeley</strain>
    </source>
</reference>
<reference key="3">
    <citation type="journal article" date="2002" name="Genome Biol.">
        <title>Annotation of the Drosophila melanogaster euchromatic genome: a systematic review.</title>
        <authorList>
            <person name="Misra S."/>
            <person name="Crosby M.A."/>
            <person name="Mungall C.J."/>
            <person name="Matthews B.B."/>
            <person name="Campbell K.S."/>
            <person name="Hradecky P."/>
            <person name="Huang Y."/>
            <person name="Kaminker J.S."/>
            <person name="Millburn G.H."/>
            <person name="Prochnik S.E."/>
            <person name="Smith C.D."/>
            <person name="Tupy J.L."/>
            <person name="Whitfield E.J."/>
            <person name="Bayraktaroglu L."/>
            <person name="Berman B.P."/>
            <person name="Bettencourt B.R."/>
            <person name="Celniker S.E."/>
            <person name="de Grey A.D.N.J."/>
            <person name="Drysdale R.A."/>
            <person name="Harris N.L."/>
            <person name="Richter J."/>
            <person name="Russo S."/>
            <person name="Schroeder A.J."/>
            <person name="Shu S.Q."/>
            <person name="Stapleton M."/>
            <person name="Yamada C."/>
            <person name="Ashburner M."/>
            <person name="Gelbart W.M."/>
            <person name="Rubin G.M."/>
            <person name="Lewis S.E."/>
        </authorList>
    </citation>
    <scope>GENOME REANNOTATION</scope>
    <source>
        <strain>Berkeley</strain>
    </source>
</reference>
<reference key="4">
    <citation type="submission" date="2006-08" db="EMBL/GenBank/DDBJ databases">
        <authorList>
            <person name="Stapleton M."/>
            <person name="Carlson J.W."/>
            <person name="Chavez C."/>
            <person name="Frise E."/>
            <person name="George R.A."/>
            <person name="Pacleb J.M."/>
            <person name="Park S."/>
            <person name="Wan K.H."/>
            <person name="Yu C."/>
            <person name="Celniker S.E."/>
        </authorList>
    </citation>
    <scope>NUCLEOTIDE SEQUENCE [LARGE SCALE MRNA]</scope>
    <source>
        <strain>Berkeley</strain>
    </source>
</reference>
<organism>
    <name type="scientific">Drosophila melanogaster</name>
    <name type="common">Fruit fly</name>
    <dbReference type="NCBI Taxonomy" id="7227"/>
    <lineage>
        <taxon>Eukaryota</taxon>
        <taxon>Metazoa</taxon>
        <taxon>Ecdysozoa</taxon>
        <taxon>Arthropoda</taxon>
        <taxon>Hexapoda</taxon>
        <taxon>Insecta</taxon>
        <taxon>Pterygota</taxon>
        <taxon>Neoptera</taxon>
        <taxon>Endopterygota</taxon>
        <taxon>Diptera</taxon>
        <taxon>Brachycera</taxon>
        <taxon>Muscomorpha</taxon>
        <taxon>Ephydroidea</taxon>
        <taxon>Drosophilidae</taxon>
        <taxon>Drosophila</taxon>
        <taxon>Sophophora</taxon>
    </lineage>
</organism>
<keyword id="KW-0010">Activator</keyword>
<keyword id="KW-0221">Differentiation</keyword>
<keyword id="KW-0539">Nucleus</keyword>
<keyword id="KW-1185">Reference proteome</keyword>
<keyword id="KW-0726">Sexual differentiation</keyword>
<keyword id="KW-0804">Transcription</keyword>
<keyword id="KW-0805">Transcription regulation</keyword>
<evidence type="ECO:0000250" key="1"/>
<evidence type="ECO:0000256" key="2">
    <source>
        <dbReference type="SAM" id="MobiDB-lite"/>
    </source>
</evidence>
<evidence type="ECO:0000269" key="3">
    <source>
    </source>
</evidence>
<evidence type="ECO:0000305" key="4"/>